<keyword id="KW-0004">4Fe-4S</keyword>
<keyword id="KW-0963">Cytoplasm</keyword>
<keyword id="KW-0408">Iron</keyword>
<keyword id="KW-0411">Iron-sulfur</keyword>
<keyword id="KW-0479">Metal-binding</keyword>
<keyword id="KW-1185">Reference proteome</keyword>
<keyword id="KW-0949">S-adenosyl-L-methionine</keyword>
<keyword id="KW-0808">Transferase</keyword>
<protein>
    <recommendedName>
        <fullName evidence="1">Lipoyl synthase</fullName>
        <ecNumber evidence="1">2.8.1.8</ecNumber>
    </recommendedName>
    <alternativeName>
        <fullName evidence="1">Lip-syn</fullName>
        <shortName evidence="1">LS</shortName>
    </alternativeName>
    <alternativeName>
        <fullName evidence="1">Lipoate synthase</fullName>
    </alternativeName>
    <alternativeName>
        <fullName evidence="1">Lipoic acid synthase</fullName>
    </alternativeName>
    <alternativeName>
        <fullName evidence="1">Sulfur insertion protein LipA</fullName>
    </alternativeName>
</protein>
<sequence>MSKPIQMERGVKYRDADKMALIPVKNVVTERQELLRKPEWLKIKLPTDSSRIQGIKAAMRKNGLHSVCEEASCPNLSECFNHGTATFMILGAICTRRCPFCDVAHGRPVTPDANEPEKLAQTIQDMGLRYVVITSVDRDDLRDGGAQHFADCISAIRAKNPTIKIETLVPDFRGRMDRALDILTATPPDVFNHNLENVPRVYRQVRPGANYDWSLKLLERFKEAHPDIPTKSGLMVGLGETNAEIVEVMHDLRRHGVTMLTLGQYLQPSRHHLPVQRYVSPAEFDEMKAEAMAMGFTHAACGPFVRSSYHADLQAKGMEVK</sequence>
<feature type="chain" id="PRO_0000102387" description="Lipoyl synthase">
    <location>
        <begin position="1"/>
        <end position="321"/>
    </location>
</feature>
<feature type="domain" description="Radical SAM core" evidence="2">
    <location>
        <begin position="80"/>
        <end position="297"/>
    </location>
</feature>
<feature type="binding site" evidence="1">
    <location>
        <position position="68"/>
    </location>
    <ligand>
        <name>[4Fe-4S] cluster</name>
        <dbReference type="ChEBI" id="CHEBI:49883"/>
        <label>1</label>
    </ligand>
</feature>
<feature type="binding site" evidence="1">
    <location>
        <position position="73"/>
    </location>
    <ligand>
        <name>[4Fe-4S] cluster</name>
        <dbReference type="ChEBI" id="CHEBI:49883"/>
        <label>1</label>
    </ligand>
</feature>
<feature type="binding site" evidence="1">
    <location>
        <position position="79"/>
    </location>
    <ligand>
        <name>[4Fe-4S] cluster</name>
        <dbReference type="ChEBI" id="CHEBI:49883"/>
        <label>1</label>
    </ligand>
</feature>
<feature type="binding site" evidence="1">
    <location>
        <position position="94"/>
    </location>
    <ligand>
        <name>[4Fe-4S] cluster</name>
        <dbReference type="ChEBI" id="CHEBI:49883"/>
        <label>2</label>
        <note>4Fe-4S-S-AdoMet</note>
    </ligand>
</feature>
<feature type="binding site" evidence="1">
    <location>
        <position position="98"/>
    </location>
    <ligand>
        <name>[4Fe-4S] cluster</name>
        <dbReference type="ChEBI" id="CHEBI:49883"/>
        <label>2</label>
        <note>4Fe-4S-S-AdoMet</note>
    </ligand>
</feature>
<feature type="binding site" evidence="1">
    <location>
        <position position="101"/>
    </location>
    <ligand>
        <name>[4Fe-4S] cluster</name>
        <dbReference type="ChEBI" id="CHEBI:49883"/>
        <label>2</label>
        <note>4Fe-4S-S-AdoMet</note>
    </ligand>
</feature>
<feature type="binding site" evidence="1">
    <location>
        <position position="308"/>
    </location>
    <ligand>
        <name>[4Fe-4S] cluster</name>
        <dbReference type="ChEBI" id="CHEBI:49883"/>
        <label>1</label>
    </ligand>
</feature>
<evidence type="ECO:0000255" key="1">
    <source>
        <dbReference type="HAMAP-Rule" id="MF_00206"/>
    </source>
</evidence>
<evidence type="ECO:0000255" key="2">
    <source>
        <dbReference type="PROSITE-ProRule" id="PRU01266"/>
    </source>
</evidence>
<evidence type="ECO:0000305" key="3"/>
<proteinExistence type="inferred from homology"/>
<accession>Q8ZDH0</accession>
<accession>Q0WDT4</accession>
<gene>
    <name evidence="1" type="primary">lipA</name>
    <name type="ordered locus">YPO2598</name>
    <name type="ordered locus">y1171</name>
    <name type="ordered locus">YP_1115</name>
</gene>
<reference key="1">
    <citation type="journal article" date="2001" name="Nature">
        <title>Genome sequence of Yersinia pestis, the causative agent of plague.</title>
        <authorList>
            <person name="Parkhill J."/>
            <person name="Wren B.W."/>
            <person name="Thomson N.R."/>
            <person name="Titball R.W."/>
            <person name="Holden M.T.G."/>
            <person name="Prentice M.B."/>
            <person name="Sebaihia M."/>
            <person name="James K.D."/>
            <person name="Churcher C.M."/>
            <person name="Mungall K.L."/>
            <person name="Baker S."/>
            <person name="Basham D."/>
            <person name="Bentley S.D."/>
            <person name="Brooks K."/>
            <person name="Cerdeno-Tarraga A.-M."/>
            <person name="Chillingworth T."/>
            <person name="Cronin A."/>
            <person name="Davies R.M."/>
            <person name="Davis P."/>
            <person name="Dougan G."/>
            <person name="Feltwell T."/>
            <person name="Hamlin N."/>
            <person name="Holroyd S."/>
            <person name="Jagels K."/>
            <person name="Karlyshev A.V."/>
            <person name="Leather S."/>
            <person name="Moule S."/>
            <person name="Oyston P.C.F."/>
            <person name="Quail M.A."/>
            <person name="Rutherford K.M."/>
            <person name="Simmonds M."/>
            <person name="Skelton J."/>
            <person name="Stevens K."/>
            <person name="Whitehead S."/>
            <person name="Barrell B.G."/>
        </authorList>
    </citation>
    <scope>NUCLEOTIDE SEQUENCE [LARGE SCALE GENOMIC DNA]</scope>
    <source>
        <strain>CO-92 / Biovar Orientalis</strain>
    </source>
</reference>
<reference key="2">
    <citation type="journal article" date="2002" name="J. Bacteriol.">
        <title>Genome sequence of Yersinia pestis KIM.</title>
        <authorList>
            <person name="Deng W."/>
            <person name="Burland V."/>
            <person name="Plunkett G. III"/>
            <person name="Boutin A."/>
            <person name="Mayhew G.F."/>
            <person name="Liss P."/>
            <person name="Perna N.T."/>
            <person name="Rose D.J."/>
            <person name="Mau B."/>
            <person name="Zhou S."/>
            <person name="Schwartz D.C."/>
            <person name="Fetherston J.D."/>
            <person name="Lindler L.E."/>
            <person name="Brubaker R.R."/>
            <person name="Plano G.V."/>
            <person name="Straley S.C."/>
            <person name="McDonough K.A."/>
            <person name="Nilles M.L."/>
            <person name="Matson J.S."/>
            <person name="Blattner F.R."/>
            <person name="Perry R.D."/>
        </authorList>
    </citation>
    <scope>NUCLEOTIDE SEQUENCE [LARGE SCALE GENOMIC DNA]</scope>
    <source>
        <strain>KIM10+ / Biovar Mediaevalis</strain>
    </source>
</reference>
<reference key="3">
    <citation type="journal article" date="2004" name="DNA Res.">
        <title>Complete genome sequence of Yersinia pestis strain 91001, an isolate avirulent to humans.</title>
        <authorList>
            <person name="Song Y."/>
            <person name="Tong Z."/>
            <person name="Wang J."/>
            <person name="Wang L."/>
            <person name="Guo Z."/>
            <person name="Han Y."/>
            <person name="Zhang J."/>
            <person name="Pei D."/>
            <person name="Zhou D."/>
            <person name="Qin H."/>
            <person name="Pang X."/>
            <person name="Han Y."/>
            <person name="Zhai J."/>
            <person name="Li M."/>
            <person name="Cui B."/>
            <person name="Qi Z."/>
            <person name="Jin L."/>
            <person name="Dai R."/>
            <person name="Chen F."/>
            <person name="Li S."/>
            <person name="Ye C."/>
            <person name="Du Z."/>
            <person name="Lin W."/>
            <person name="Wang J."/>
            <person name="Yu J."/>
            <person name="Yang H."/>
            <person name="Wang J."/>
            <person name="Huang P."/>
            <person name="Yang R."/>
        </authorList>
    </citation>
    <scope>NUCLEOTIDE SEQUENCE [LARGE SCALE GENOMIC DNA]</scope>
    <source>
        <strain>91001 / Biovar Mediaevalis</strain>
    </source>
</reference>
<comment type="function">
    <text evidence="1">Catalyzes the radical-mediated insertion of two sulfur atoms into the C-6 and C-8 positions of the octanoyl moiety bound to the lipoyl domains of lipoate-dependent enzymes, thereby converting the octanoylated domains into lipoylated derivatives.</text>
</comment>
<comment type="catalytic activity">
    <reaction evidence="1">
        <text>[[Fe-S] cluster scaffold protein carrying a second [4Fe-4S](2+) cluster] + N(6)-octanoyl-L-lysyl-[protein] + 2 oxidized [2Fe-2S]-[ferredoxin] + 2 S-adenosyl-L-methionine + 4 H(+) = [[Fe-S] cluster scaffold protein] + N(6)-[(R)-dihydrolipoyl]-L-lysyl-[protein] + 4 Fe(3+) + 2 hydrogen sulfide + 2 5'-deoxyadenosine + 2 L-methionine + 2 reduced [2Fe-2S]-[ferredoxin]</text>
        <dbReference type="Rhea" id="RHEA:16585"/>
        <dbReference type="Rhea" id="RHEA-COMP:9928"/>
        <dbReference type="Rhea" id="RHEA-COMP:10000"/>
        <dbReference type="Rhea" id="RHEA-COMP:10001"/>
        <dbReference type="Rhea" id="RHEA-COMP:10475"/>
        <dbReference type="Rhea" id="RHEA-COMP:14568"/>
        <dbReference type="Rhea" id="RHEA-COMP:14569"/>
        <dbReference type="ChEBI" id="CHEBI:15378"/>
        <dbReference type="ChEBI" id="CHEBI:17319"/>
        <dbReference type="ChEBI" id="CHEBI:29034"/>
        <dbReference type="ChEBI" id="CHEBI:29919"/>
        <dbReference type="ChEBI" id="CHEBI:33722"/>
        <dbReference type="ChEBI" id="CHEBI:33737"/>
        <dbReference type="ChEBI" id="CHEBI:33738"/>
        <dbReference type="ChEBI" id="CHEBI:57844"/>
        <dbReference type="ChEBI" id="CHEBI:59789"/>
        <dbReference type="ChEBI" id="CHEBI:78809"/>
        <dbReference type="ChEBI" id="CHEBI:83100"/>
        <dbReference type="EC" id="2.8.1.8"/>
    </reaction>
</comment>
<comment type="cofactor">
    <cofactor evidence="1">
        <name>[4Fe-4S] cluster</name>
        <dbReference type="ChEBI" id="CHEBI:49883"/>
    </cofactor>
    <text evidence="1">Binds 2 [4Fe-4S] clusters per subunit. One cluster is coordinated with 3 cysteines and an exchangeable S-adenosyl-L-methionine.</text>
</comment>
<comment type="pathway">
    <text evidence="1">Protein modification; protein lipoylation via endogenous pathway; protein N(6)-(lipoyl)lysine from octanoyl-[acyl-carrier-protein]: step 2/2.</text>
</comment>
<comment type="subcellular location">
    <subcellularLocation>
        <location evidence="1">Cytoplasm</location>
    </subcellularLocation>
</comment>
<comment type="similarity">
    <text evidence="1">Belongs to the radical SAM superfamily. Lipoyl synthase family.</text>
</comment>
<comment type="sequence caution" evidence="3">
    <conflict type="erroneous initiation">
        <sequence resource="EMBL-CDS" id="AAS61361"/>
    </conflict>
</comment>
<name>LIPA_YERPE</name>
<organism>
    <name type="scientific">Yersinia pestis</name>
    <dbReference type="NCBI Taxonomy" id="632"/>
    <lineage>
        <taxon>Bacteria</taxon>
        <taxon>Pseudomonadati</taxon>
        <taxon>Pseudomonadota</taxon>
        <taxon>Gammaproteobacteria</taxon>
        <taxon>Enterobacterales</taxon>
        <taxon>Yersiniaceae</taxon>
        <taxon>Yersinia</taxon>
    </lineage>
</organism>
<dbReference type="EC" id="2.8.1.8" evidence="1"/>
<dbReference type="EMBL" id="AL590842">
    <property type="protein sequence ID" value="CAL21221.1"/>
    <property type="molecule type" value="Genomic_DNA"/>
</dbReference>
<dbReference type="EMBL" id="AE009952">
    <property type="protein sequence ID" value="AAM84748.1"/>
    <property type="molecule type" value="Genomic_DNA"/>
</dbReference>
<dbReference type="EMBL" id="AE017042">
    <property type="protein sequence ID" value="AAS61361.1"/>
    <property type="status" value="ALT_INIT"/>
    <property type="molecule type" value="Genomic_DNA"/>
</dbReference>
<dbReference type="PIR" id="AB0317">
    <property type="entry name" value="AB0317"/>
</dbReference>
<dbReference type="RefSeq" id="WP_002210320.1">
    <property type="nucleotide sequence ID" value="NZ_WUCM01000011.1"/>
</dbReference>
<dbReference type="RefSeq" id="YP_002347554.1">
    <property type="nucleotide sequence ID" value="NC_003143.1"/>
</dbReference>
<dbReference type="SMR" id="Q8ZDH0"/>
<dbReference type="STRING" id="214092.YPO2598"/>
<dbReference type="PaxDb" id="214092-YPO2598"/>
<dbReference type="DNASU" id="1146118"/>
<dbReference type="EnsemblBacteria" id="AAS61361">
    <property type="protein sequence ID" value="AAS61361"/>
    <property type="gene ID" value="YP_1115"/>
</dbReference>
<dbReference type="GeneID" id="96664611"/>
<dbReference type="KEGG" id="ype:YPO2598"/>
<dbReference type="KEGG" id="ypk:y1171"/>
<dbReference type="KEGG" id="ypm:YP_1115"/>
<dbReference type="PATRIC" id="fig|214092.21.peg.3027"/>
<dbReference type="eggNOG" id="COG0320">
    <property type="taxonomic scope" value="Bacteria"/>
</dbReference>
<dbReference type="HOGENOM" id="CLU_033144_2_1_6"/>
<dbReference type="OMA" id="PYCDIDF"/>
<dbReference type="OrthoDB" id="9787898at2"/>
<dbReference type="UniPathway" id="UPA00538">
    <property type="reaction ID" value="UER00593"/>
</dbReference>
<dbReference type="Proteomes" id="UP000000815">
    <property type="component" value="Chromosome"/>
</dbReference>
<dbReference type="Proteomes" id="UP000001019">
    <property type="component" value="Chromosome"/>
</dbReference>
<dbReference type="Proteomes" id="UP000002490">
    <property type="component" value="Chromosome"/>
</dbReference>
<dbReference type="GO" id="GO:0005737">
    <property type="term" value="C:cytoplasm"/>
    <property type="evidence" value="ECO:0007669"/>
    <property type="project" value="UniProtKB-SubCell"/>
</dbReference>
<dbReference type="GO" id="GO:0051539">
    <property type="term" value="F:4 iron, 4 sulfur cluster binding"/>
    <property type="evidence" value="ECO:0007669"/>
    <property type="project" value="UniProtKB-UniRule"/>
</dbReference>
<dbReference type="GO" id="GO:0016992">
    <property type="term" value="F:lipoate synthase activity"/>
    <property type="evidence" value="ECO:0007669"/>
    <property type="project" value="UniProtKB-UniRule"/>
</dbReference>
<dbReference type="GO" id="GO:0046872">
    <property type="term" value="F:metal ion binding"/>
    <property type="evidence" value="ECO:0007669"/>
    <property type="project" value="UniProtKB-KW"/>
</dbReference>
<dbReference type="CDD" id="cd01335">
    <property type="entry name" value="Radical_SAM"/>
    <property type="match status" value="1"/>
</dbReference>
<dbReference type="FunFam" id="3.20.20.70:FF:000023">
    <property type="entry name" value="Lipoyl synthase"/>
    <property type="match status" value="1"/>
</dbReference>
<dbReference type="Gene3D" id="3.20.20.70">
    <property type="entry name" value="Aldolase class I"/>
    <property type="match status" value="1"/>
</dbReference>
<dbReference type="HAMAP" id="MF_00206">
    <property type="entry name" value="Lipoyl_synth"/>
    <property type="match status" value="1"/>
</dbReference>
<dbReference type="InterPro" id="IPR013785">
    <property type="entry name" value="Aldolase_TIM"/>
</dbReference>
<dbReference type="InterPro" id="IPR006638">
    <property type="entry name" value="Elp3/MiaA/NifB-like_rSAM"/>
</dbReference>
<dbReference type="InterPro" id="IPR031691">
    <property type="entry name" value="LIAS_N"/>
</dbReference>
<dbReference type="InterPro" id="IPR003698">
    <property type="entry name" value="Lipoyl_synth"/>
</dbReference>
<dbReference type="InterPro" id="IPR007197">
    <property type="entry name" value="rSAM"/>
</dbReference>
<dbReference type="NCBIfam" id="TIGR00510">
    <property type="entry name" value="lipA"/>
    <property type="match status" value="1"/>
</dbReference>
<dbReference type="NCBIfam" id="NF004019">
    <property type="entry name" value="PRK05481.1"/>
    <property type="match status" value="1"/>
</dbReference>
<dbReference type="NCBIfam" id="NF009544">
    <property type="entry name" value="PRK12928.1"/>
    <property type="match status" value="1"/>
</dbReference>
<dbReference type="PANTHER" id="PTHR10949">
    <property type="entry name" value="LIPOYL SYNTHASE"/>
    <property type="match status" value="1"/>
</dbReference>
<dbReference type="PANTHER" id="PTHR10949:SF0">
    <property type="entry name" value="LIPOYL SYNTHASE, MITOCHONDRIAL"/>
    <property type="match status" value="1"/>
</dbReference>
<dbReference type="Pfam" id="PF16881">
    <property type="entry name" value="LIAS_N"/>
    <property type="match status" value="1"/>
</dbReference>
<dbReference type="Pfam" id="PF04055">
    <property type="entry name" value="Radical_SAM"/>
    <property type="match status" value="1"/>
</dbReference>
<dbReference type="PIRSF" id="PIRSF005963">
    <property type="entry name" value="Lipoyl_synth"/>
    <property type="match status" value="1"/>
</dbReference>
<dbReference type="SFLD" id="SFLDF00271">
    <property type="entry name" value="lipoyl_synthase"/>
    <property type="match status" value="1"/>
</dbReference>
<dbReference type="SFLD" id="SFLDG01058">
    <property type="entry name" value="lipoyl_synthase_like"/>
    <property type="match status" value="1"/>
</dbReference>
<dbReference type="SMART" id="SM00729">
    <property type="entry name" value="Elp3"/>
    <property type="match status" value="1"/>
</dbReference>
<dbReference type="SUPFAM" id="SSF102114">
    <property type="entry name" value="Radical SAM enzymes"/>
    <property type="match status" value="1"/>
</dbReference>
<dbReference type="PROSITE" id="PS51918">
    <property type="entry name" value="RADICAL_SAM"/>
    <property type="match status" value="1"/>
</dbReference>